<comment type="catalytic activity">
    <reaction evidence="1">
        <text>2-(N(omega)-L-arginino)succinate = fumarate + L-arginine</text>
        <dbReference type="Rhea" id="RHEA:24020"/>
        <dbReference type="ChEBI" id="CHEBI:29806"/>
        <dbReference type="ChEBI" id="CHEBI:32682"/>
        <dbReference type="ChEBI" id="CHEBI:57472"/>
        <dbReference type="EC" id="4.3.2.1"/>
    </reaction>
</comment>
<comment type="pathway">
    <text evidence="1">Amino-acid biosynthesis; L-arginine biosynthesis; L-arginine from L-ornithine and carbamoyl phosphate: step 3/3.</text>
</comment>
<comment type="subcellular location">
    <subcellularLocation>
        <location evidence="1">Cytoplasm</location>
    </subcellularLocation>
</comment>
<comment type="similarity">
    <text evidence="1">Belongs to the lyase 1 family. Argininosuccinate lyase subfamily.</text>
</comment>
<organism>
    <name type="scientific">Shewanella sp. (strain MR-4)</name>
    <dbReference type="NCBI Taxonomy" id="60480"/>
    <lineage>
        <taxon>Bacteria</taxon>
        <taxon>Pseudomonadati</taxon>
        <taxon>Pseudomonadota</taxon>
        <taxon>Gammaproteobacteria</taxon>
        <taxon>Alteromonadales</taxon>
        <taxon>Shewanellaceae</taxon>
        <taxon>Shewanella</taxon>
    </lineage>
</organism>
<reference key="1">
    <citation type="submission" date="2006-08" db="EMBL/GenBank/DDBJ databases">
        <title>Complete sequence of Shewanella sp. MR-4.</title>
        <authorList>
            <consortium name="US DOE Joint Genome Institute"/>
            <person name="Copeland A."/>
            <person name="Lucas S."/>
            <person name="Lapidus A."/>
            <person name="Barry K."/>
            <person name="Detter J.C."/>
            <person name="Glavina del Rio T."/>
            <person name="Hammon N."/>
            <person name="Israni S."/>
            <person name="Dalin E."/>
            <person name="Tice H."/>
            <person name="Pitluck S."/>
            <person name="Kiss H."/>
            <person name="Brettin T."/>
            <person name="Bruce D."/>
            <person name="Han C."/>
            <person name="Tapia R."/>
            <person name="Gilna P."/>
            <person name="Schmutz J."/>
            <person name="Larimer F."/>
            <person name="Land M."/>
            <person name="Hauser L."/>
            <person name="Kyrpides N."/>
            <person name="Mikhailova N."/>
            <person name="Nealson K."/>
            <person name="Konstantinidis K."/>
            <person name="Klappenbach J."/>
            <person name="Tiedje J."/>
            <person name="Richardson P."/>
        </authorList>
    </citation>
    <scope>NUCLEOTIDE SEQUENCE [LARGE SCALE GENOMIC DNA]</scope>
    <source>
        <strain>MR-4</strain>
    </source>
</reference>
<dbReference type="EC" id="4.3.2.1" evidence="1"/>
<dbReference type="EMBL" id="CP000446">
    <property type="protein sequence ID" value="ABI40768.1"/>
    <property type="molecule type" value="Genomic_DNA"/>
</dbReference>
<dbReference type="RefSeq" id="WP_011624427.1">
    <property type="nucleotide sequence ID" value="NC_008321.1"/>
</dbReference>
<dbReference type="SMR" id="Q0HDU9"/>
<dbReference type="KEGG" id="she:Shewmr4_3705"/>
<dbReference type="HOGENOM" id="CLU_027272_2_3_6"/>
<dbReference type="UniPathway" id="UPA00068">
    <property type="reaction ID" value="UER00114"/>
</dbReference>
<dbReference type="GO" id="GO:0005829">
    <property type="term" value="C:cytosol"/>
    <property type="evidence" value="ECO:0007669"/>
    <property type="project" value="TreeGrafter"/>
</dbReference>
<dbReference type="GO" id="GO:0004056">
    <property type="term" value="F:argininosuccinate lyase activity"/>
    <property type="evidence" value="ECO:0007669"/>
    <property type="project" value="UniProtKB-UniRule"/>
</dbReference>
<dbReference type="GO" id="GO:0042450">
    <property type="term" value="P:arginine biosynthetic process via ornithine"/>
    <property type="evidence" value="ECO:0007669"/>
    <property type="project" value="InterPro"/>
</dbReference>
<dbReference type="GO" id="GO:0006526">
    <property type="term" value="P:L-arginine biosynthetic process"/>
    <property type="evidence" value="ECO:0007669"/>
    <property type="project" value="UniProtKB-UniRule"/>
</dbReference>
<dbReference type="CDD" id="cd01359">
    <property type="entry name" value="Argininosuccinate_lyase"/>
    <property type="match status" value="1"/>
</dbReference>
<dbReference type="FunFam" id="1.10.40.30:FF:000001">
    <property type="entry name" value="Argininosuccinate lyase"/>
    <property type="match status" value="1"/>
</dbReference>
<dbReference type="FunFam" id="1.20.200.10:FF:000006">
    <property type="entry name" value="Argininosuccinate lyase"/>
    <property type="match status" value="1"/>
</dbReference>
<dbReference type="Gene3D" id="1.10.40.30">
    <property type="entry name" value="Fumarase/aspartase (C-terminal domain)"/>
    <property type="match status" value="1"/>
</dbReference>
<dbReference type="Gene3D" id="1.20.200.10">
    <property type="entry name" value="Fumarase/aspartase (Central domain)"/>
    <property type="match status" value="1"/>
</dbReference>
<dbReference type="Gene3D" id="1.10.275.10">
    <property type="entry name" value="Fumarase/aspartase (N-terminal domain)"/>
    <property type="match status" value="1"/>
</dbReference>
<dbReference type="HAMAP" id="MF_00006">
    <property type="entry name" value="Arg_succ_lyase"/>
    <property type="match status" value="1"/>
</dbReference>
<dbReference type="InterPro" id="IPR029419">
    <property type="entry name" value="Arg_succ_lyase_C"/>
</dbReference>
<dbReference type="InterPro" id="IPR009049">
    <property type="entry name" value="Argininosuccinate_lyase"/>
</dbReference>
<dbReference type="InterPro" id="IPR024083">
    <property type="entry name" value="Fumarase/histidase_N"/>
</dbReference>
<dbReference type="InterPro" id="IPR020557">
    <property type="entry name" value="Fumarate_lyase_CS"/>
</dbReference>
<dbReference type="InterPro" id="IPR000362">
    <property type="entry name" value="Fumarate_lyase_fam"/>
</dbReference>
<dbReference type="InterPro" id="IPR022761">
    <property type="entry name" value="Fumarate_lyase_N"/>
</dbReference>
<dbReference type="InterPro" id="IPR008948">
    <property type="entry name" value="L-Aspartase-like"/>
</dbReference>
<dbReference type="NCBIfam" id="TIGR00838">
    <property type="entry name" value="argH"/>
    <property type="match status" value="1"/>
</dbReference>
<dbReference type="NCBIfam" id="NF008964">
    <property type="entry name" value="PRK12308.1"/>
    <property type="match status" value="1"/>
</dbReference>
<dbReference type="PANTHER" id="PTHR43814">
    <property type="entry name" value="ARGININOSUCCINATE LYASE"/>
    <property type="match status" value="1"/>
</dbReference>
<dbReference type="PANTHER" id="PTHR43814:SF1">
    <property type="entry name" value="ARGININOSUCCINATE LYASE"/>
    <property type="match status" value="1"/>
</dbReference>
<dbReference type="Pfam" id="PF14698">
    <property type="entry name" value="ASL_C2"/>
    <property type="match status" value="1"/>
</dbReference>
<dbReference type="Pfam" id="PF00206">
    <property type="entry name" value="Lyase_1"/>
    <property type="match status" value="1"/>
</dbReference>
<dbReference type="PRINTS" id="PR00145">
    <property type="entry name" value="ARGSUCLYASE"/>
</dbReference>
<dbReference type="PRINTS" id="PR00149">
    <property type="entry name" value="FUMRATELYASE"/>
</dbReference>
<dbReference type="SUPFAM" id="SSF48557">
    <property type="entry name" value="L-aspartase-like"/>
    <property type="match status" value="1"/>
</dbReference>
<dbReference type="PROSITE" id="PS00163">
    <property type="entry name" value="FUMARATE_LYASES"/>
    <property type="match status" value="1"/>
</dbReference>
<sequence>MALWGGRFQGETSALFKLFNDSLPVDYRLFEQDVVGSIAWADAIASVGIITATECSDLKKALNELLVEVKGDPAIILASGAEDIHSFVESALIAKVGDLGKKLHTGRSRNDQVATDLKLWCQSEGAALVARLQTLRSELIALAEREFDAVMPGYTHLQRAQPVTFGHWCLAYVEMIERDLSRLTDALKRANTCPLGSGALAGTAYQMDRHALAAALNFASPTLNSLDSVSDRDHVVELCSTASISMMHLSRMAEDLIFFNSGEAGFISLSDEVTSGSSLMPQKKNPDALELIRGKTGRVYGSLVGILTTMKALPLAYNKDMQEDKEGLFDVVDSWAICLDMAALVLSGLVVNRPNALLAAQQGYANATELADYLVSKGMPFREAHHVVGVAVVAAIAKKIPLEGFTLAEFKTFADIIEDDVYPNLTIEACLAKRDVLGGTALAQVKQAIAAKNAG</sequence>
<protein>
    <recommendedName>
        <fullName evidence="1">Argininosuccinate lyase</fullName>
        <shortName evidence="1">ASAL</shortName>
        <ecNumber evidence="1">4.3.2.1</ecNumber>
    </recommendedName>
    <alternativeName>
        <fullName evidence="1">Arginosuccinase</fullName>
    </alternativeName>
</protein>
<accession>Q0HDU9</accession>
<proteinExistence type="inferred from homology"/>
<keyword id="KW-0028">Amino-acid biosynthesis</keyword>
<keyword id="KW-0055">Arginine biosynthesis</keyword>
<keyword id="KW-0963">Cytoplasm</keyword>
<keyword id="KW-0456">Lyase</keyword>
<feature type="chain" id="PRO_1000000541" description="Argininosuccinate lyase">
    <location>
        <begin position="1"/>
        <end position="455"/>
    </location>
</feature>
<gene>
    <name evidence="1" type="primary">argH</name>
    <name type="ordered locus">Shewmr4_3705</name>
</gene>
<evidence type="ECO:0000255" key="1">
    <source>
        <dbReference type="HAMAP-Rule" id="MF_00006"/>
    </source>
</evidence>
<name>ARLY_SHESM</name>